<proteinExistence type="inferred from homology"/>
<keyword id="KW-0150">Chloroplast</keyword>
<keyword id="KW-0472">Membrane</keyword>
<keyword id="KW-0520">NAD</keyword>
<keyword id="KW-0521">NADP</keyword>
<keyword id="KW-0934">Plastid</keyword>
<keyword id="KW-0618">Plastoquinone</keyword>
<keyword id="KW-0874">Quinone</keyword>
<keyword id="KW-0793">Thylakoid</keyword>
<keyword id="KW-1278">Translocase</keyword>
<keyword id="KW-0812">Transmembrane</keyword>
<keyword id="KW-1133">Transmembrane helix</keyword>
<keyword id="KW-0813">Transport</keyword>
<protein>
    <recommendedName>
        <fullName evidence="1">NAD(P)H-quinone oxidoreductase subunit 4L, chloroplastic</fullName>
        <ecNumber evidence="1">7.1.1.-</ecNumber>
    </recommendedName>
    <alternativeName>
        <fullName evidence="1">NAD(P)H dehydrogenase subunit 4L</fullName>
    </alternativeName>
    <alternativeName>
        <fullName evidence="1">NADH-plastoquinone oxidoreductase subunit 4L</fullName>
    </alternativeName>
</protein>
<comment type="function">
    <text evidence="1">NDH shuttles electrons from NAD(P)H:plastoquinone, via FMN and iron-sulfur (Fe-S) centers, to quinones in the photosynthetic chain and possibly in a chloroplast respiratory chain. The immediate electron acceptor for the enzyme in this species is believed to be plastoquinone. Couples the redox reaction to proton translocation, and thus conserves the redox energy in a proton gradient.</text>
</comment>
<comment type="catalytic activity">
    <reaction evidence="1">
        <text>a plastoquinone + NADH + (n+1) H(+)(in) = a plastoquinol + NAD(+) + n H(+)(out)</text>
        <dbReference type="Rhea" id="RHEA:42608"/>
        <dbReference type="Rhea" id="RHEA-COMP:9561"/>
        <dbReference type="Rhea" id="RHEA-COMP:9562"/>
        <dbReference type="ChEBI" id="CHEBI:15378"/>
        <dbReference type="ChEBI" id="CHEBI:17757"/>
        <dbReference type="ChEBI" id="CHEBI:57540"/>
        <dbReference type="ChEBI" id="CHEBI:57945"/>
        <dbReference type="ChEBI" id="CHEBI:62192"/>
    </reaction>
</comment>
<comment type="catalytic activity">
    <reaction evidence="1">
        <text>a plastoquinone + NADPH + (n+1) H(+)(in) = a plastoquinol + NADP(+) + n H(+)(out)</text>
        <dbReference type="Rhea" id="RHEA:42612"/>
        <dbReference type="Rhea" id="RHEA-COMP:9561"/>
        <dbReference type="Rhea" id="RHEA-COMP:9562"/>
        <dbReference type="ChEBI" id="CHEBI:15378"/>
        <dbReference type="ChEBI" id="CHEBI:17757"/>
        <dbReference type="ChEBI" id="CHEBI:57783"/>
        <dbReference type="ChEBI" id="CHEBI:58349"/>
        <dbReference type="ChEBI" id="CHEBI:62192"/>
    </reaction>
</comment>
<comment type="subunit">
    <text evidence="1">NDH is composed of at least 16 different subunits, 5 of which are encoded in the nucleus.</text>
</comment>
<comment type="subcellular location">
    <subcellularLocation>
        <location evidence="1">Plastid</location>
        <location evidence="1">Chloroplast thylakoid membrane</location>
        <topology evidence="1">Multi-pass membrane protein</topology>
    </subcellularLocation>
</comment>
<comment type="similarity">
    <text evidence="1">Belongs to the complex I subunit 4L family.</text>
</comment>
<feature type="chain" id="PRO_0000118511" description="NAD(P)H-quinone oxidoreductase subunit 4L, chloroplastic">
    <location>
        <begin position="1"/>
        <end position="101"/>
    </location>
</feature>
<feature type="transmembrane region" description="Helical" evidence="1">
    <location>
        <begin position="2"/>
        <end position="22"/>
    </location>
</feature>
<feature type="transmembrane region" description="Helical" evidence="1">
    <location>
        <begin position="32"/>
        <end position="52"/>
    </location>
</feature>
<feature type="transmembrane region" description="Helical" evidence="1">
    <location>
        <begin position="61"/>
        <end position="81"/>
    </location>
</feature>
<sequence length="101" mass="11262">MIFQSYLLIAASMFCIGLYGLLTSRNVVRVLMSLELLLNAVNLNLLTFSNFVDSHEMKGQVLALFVIALAAAEAAIGLAIILSIYRNQRTVDPEQFNLLKW</sequence>
<evidence type="ECO:0000255" key="1">
    <source>
        <dbReference type="HAMAP-Rule" id="MF_01456"/>
    </source>
</evidence>
<organism>
    <name type="scientific">Nephroselmis olivacea</name>
    <name type="common">Green alga</name>
    <dbReference type="NCBI Taxonomy" id="31312"/>
    <lineage>
        <taxon>Eukaryota</taxon>
        <taxon>Viridiplantae</taxon>
        <taxon>Chlorophyta</taxon>
        <taxon>Nephroselmidophyceae</taxon>
        <taxon>Nephroselmidales</taxon>
        <taxon>Nephroselmidaceae</taxon>
        <taxon>Nephroselmis</taxon>
    </lineage>
</organism>
<name>NU4LC_NEPOL</name>
<dbReference type="EC" id="7.1.1.-" evidence="1"/>
<dbReference type="EMBL" id="AF137379">
    <property type="protein sequence ID" value="AAD54895.1"/>
    <property type="molecule type" value="Genomic_DNA"/>
</dbReference>
<dbReference type="RefSeq" id="NP_050924.1">
    <property type="nucleotide sequence ID" value="NC_000927.1"/>
</dbReference>
<dbReference type="SMR" id="Q9TKV2"/>
<dbReference type="GeneID" id="801929"/>
<dbReference type="GO" id="GO:0009535">
    <property type="term" value="C:chloroplast thylakoid membrane"/>
    <property type="evidence" value="ECO:0007669"/>
    <property type="project" value="UniProtKB-SubCell"/>
</dbReference>
<dbReference type="GO" id="GO:0030964">
    <property type="term" value="C:NADH dehydrogenase complex"/>
    <property type="evidence" value="ECO:0007669"/>
    <property type="project" value="TreeGrafter"/>
</dbReference>
<dbReference type="GO" id="GO:0016655">
    <property type="term" value="F:oxidoreductase activity, acting on NAD(P)H, quinone or similar compound as acceptor"/>
    <property type="evidence" value="ECO:0007669"/>
    <property type="project" value="UniProtKB-UniRule"/>
</dbReference>
<dbReference type="GO" id="GO:0048038">
    <property type="term" value="F:quinone binding"/>
    <property type="evidence" value="ECO:0007669"/>
    <property type="project" value="UniProtKB-KW"/>
</dbReference>
<dbReference type="GO" id="GO:0042773">
    <property type="term" value="P:ATP synthesis coupled electron transport"/>
    <property type="evidence" value="ECO:0007669"/>
    <property type="project" value="InterPro"/>
</dbReference>
<dbReference type="GO" id="GO:0019684">
    <property type="term" value="P:photosynthesis, light reaction"/>
    <property type="evidence" value="ECO:0007669"/>
    <property type="project" value="UniProtKB-UniRule"/>
</dbReference>
<dbReference type="FunFam" id="1.10.287.3510:FF:000001">
    <property type="entry name" value="NADH-quinone oxidoreductase subunit K"/>
    <property type="match status" value="1"/>
</dbReference>
<dbReference type="Gene3D" id="1.10.287.3510">
    <property type="match status" value="1"/>
</dbReference>
<dbReference type="HAMAP" id="MF_01456">
    <property type="entry name" value="NDH1_NuoK"/>
    <property type="match status" value="1"/>
</dbReference>
<dbReference type="InterPro" id="IPR001133">
    <property type="entry name" value="NADH_UbQ_OxRdtase_chain4L/K"/>
</dbReference>
<dbReference type="InterPro" id="IPR039428">
    <property type="entry name" value="NUOK/Mnh_C1-like"/>
</dbReference>
<dbReference type="NCBIfam" id="NF004320">
    <property type="entry name" value="PRK05715.1-2"/>
    <property type="match status" value="1"/>
</dbReference>
<dbReference type="NCBIfam" id="NF004322">
    <property type="entry name" value="PRK05715.1-4"/>
    <property type="match status" value="1"/>
</dbReference>
<dbReference type="NCBIfam" id="NF004323">
    <property type="entry name" value="PRK05715.1-5"/>
    <property type="match status" value="1"/>
</dbReference>
<dbReference type="PANTHER" id="PTHR11434:SF16">
    <property type="entry name" value="NADH-UBIQUINONE OXIDOREDUCTASE CHAIN 4L"/>
    <property type="match status" value="1"/>
</dbReference>
<dbReference type="PANTHER" id="PTHR11434">
    <property type="entry name" value="NADH-UBIQUINONE OXIDOREDUCTASE SUBUNIT ND4L"/>
    <property type="match status" value="1"/>
</dbReference>
<dbReference type="Pfam" id="PF00420">
    <property type="entry name" value="Oxidored_q2"/>
    <property type="match status" value="1"/>
</dbReference>
<gene>
    <name evidence="1" type="primary">ndhE</name>
</gene>
<reference key="1">
    <citation type="journal article" date="1999" name="Proc. Natl. Acad. Sci. U.S.A.">
        <title>The complete chloroplast DNA sequence of the green alga Nephroselmis olivacea: insights into the architecture of ancestral chloroplast genomes.</title>
        <authorList>
            <person name="Turmel M."/>
            <person name="Otis C."/>
            <person name="Lemieux C."/>
        </authorList>
    </citation>
    <scope>NUCLEOTIDE SEQUENCE [LARGE SCALE GENOMIC DNA]</scope>
    <source>
        <strain>NIES-484 / S-N-5-8</strain>
    </source>
</reference>
<geneLocation type="chloroplast"/>
<accession>Q9TKV2</accession>